<name>RNB_YERPN</name>
<reference key="1">
    <citation type="journal article" date="2006" name="J. Bacteriol.">
        <title>Complete genome sequence of Yersinia pestis strains Antiqua and Nepal516: evidence of gene reduction in an emerging pathogen.</title>
        <authorList>
            <person name="Chain P.S.G."/>
            <person name="Hu P."/>
            <person name="Malfatti S.A."/>
            <person name="Radnedge L."/>
            <person name="Larimer F."/>
            <person name="Vergez L.M."/>
            <person name="Worsham P."/>
            <person name="Chu M.C."/>
            <person name="Andersen G.L."/>
        </authorList>
    </citation>
    <scope>NUCLEOTIDE SEQUENCE [LARGE SCALE GENOMIC DNA]</scope>
    <source>
        <strain>Nepal516</strain>
    </source>
</reference>
<reference key="2">
    <citation type="submission" date="2009-04" db="EMBL/GenBank/DDBJ databases">
        <title>Yersinia pestis Nepal516A whole genome shotgun sequencing project.</title>
        <authorList>
            <person name="Plunkett G. III"/>
            <person name="Anderson B.D."/>
            <person name="Baumler D.J."/>
            <person name="Burland V."/>
            <person name="Cabot E.L."/>
            <person name="Glasner J.D."/>
            <person name="Mau B."/>
            <person name="Neeno-Eckwall E."/>
            <person name="Perna N.T."/>
            <person name="Munk A.C."/>
            <person name="Tapia R."/>
            <person name="Green L.D."/>
            <person name="Rogers Y.C."/>
            <person name="Detter J.C."/>
            <person name="Bruce D.C."/>
            <person name="Brettin T.S."/>
        </authorList>
    </citation>
    <scope>NUCLEOTIDE SEQUENCE [LARGE SCALE GENOMIC DNA]</scope>
    <source>
        <strain>Nepal516</strain>
    </source>
</reference>
<gene>
    <name evidence="2" type="primary">rnb</name>
    <name type="ordered locus">YPN_1704</name>
    <name type="ORF">YP516_1894</name>
</gene>
<keyword id="KW-0963">Cytoplasm</keyword>
<keyword id="KW-0269">Exonuclease</keyword>
<keyword id="KW-0378">Hydrolase</keyword>
<keyword id="KW-0540">Nuclease</keyword>
<keyword id="KW-0694">RNA-binding</keyword>
<evidence type="ECO:0000255" key="1"/>
<evidence type="ECO:0000255" key="2">
    <source>
        <dbReference type="HAMAP-Rule" id="MF_01036"/>
    </source>
</evidence>
<feature type="chain" id="PRO_1000063906" description="Exoribonuclease 2">
    <location>
        <begin position="1"/>
        <end position="644"/>
    </location>
</feature>
<feature type="domain" description="RNB" evidence="1">
    <location>
        <begin position="189"/>
        <end position="516"/>
    </location>
</feature>
<feature type="domain" description="S1 motif" evidence="2">
    <location>
        <begin position="561"/>
        <end position="643"/>
    </location>
</feature>
<comment type="function">
    <text evidence="2">Involved in mRNA degradation. Hydrolyzes single-stranded polyribonucleotides processively in the 3' to 5' direction.</text>
</comment>
<comment type="catalytic activity">
    <reaction evidence="2">
        <text>Exonucleolytic cleavage in the 3'- to 5'-direction to yield nucleoside 5'-phosphates.</text>
        <dbReference type="EC" id="3.1.13.1"/>
    </reaction>
</comment>
<comment type="subcellular location">
    <subcellularLocation>
        <location evidence="2">Cytoplasm</location>
    </subcellularLocation>
</comment>
<comment type="similarity">
    <text evidence="2">Belongs to the RNR ribonuclease family. RNase II subfamily.</text>
</comment>
<dbReference type="EC" id="3.1.13.1" evidence="2"/>
<dbReference type="EMBL" id="CP000305">
    <property type="protein sequence ID" value="ABG18033.1"/>
    <property type="molecule type" value="Genomic_DNA"/>
</dbReference>
<dbReference type="EMBL" id="ACNQ01000009">
    <property type="protein sequence ID" value="EEO77159.1"/>
    <property type="molecule type" value="Genomic_DNA"/>
</dbReference>
<dbReference type="RefSeq" id="WP_002210605.1">
    <property type="nucleotide sequence ID" value="NZ_ACNQ01000009.1"/>
</dbReference>
<dbReference type="SMR" id="Q1CIZ7"/>
<dbReference type="KEGG" id="ypn:YPN_1704"/>
<dbReference type="HOGENOM" id="CLU_002333_7_3_6"/>
<dbReference type="Proteomes" id="UP000008936">
    <property type="component" value="Chromosome"/>
</dbReference>
<dbReference type="GO" id="GO:0005829">
    <property type="term" value="C:cytosol"/>
    <property type="evidence" value="ECO:0007669"/>
    <property type="project" value="UniProtKB-ARBA"/>
</dbReference>
<dbReference type="GO" id="GO:0008859">
    <property type="term" value="F:exoribonuclease II activity"/>
    <property type="evidence" value="ECO:0007669"/>
    <property type="project" value="UniProtKB-UniRule"/>
</dbReference>
<dbReference type="GO" id="GO:0003723">
    <property type="term" value="F:RNA binding"/>
    <property type="evidence" value="ECO:0007669"/>
    <property type="project" value="UniProtKB-KW"/>
</dbReference>
<dbReference type="GO" id="GO:0006402">
    <property type="term" value="P:mRNA catabolic process"/>
    <property type="evidence" value="ECO:0007669"/>
    <property type="project" value="UniProtKB-UniRule"/>
</dbReference>
<dbReference type="FunFam" id="2.40.50.140:FF:000079">
    <property type="entry name" value="Exoribonuclease 2"/>
    <property type="match status" value="1"/>
</dbReference>
<dbReference type="Gene3D" id="2.40.50.640">
    <property type="match status" value="1"/>
</dbReference>
<dbReference type="Gene3D" id="2.40.50.140">
    <property type="entry name" value="Nucleic acid-binding proteins"/>
    <property type="match status" value="2"/>
</dbReference>
<dbReference type="HAMAP" id="MF_01036">
    <property type="entry name" value="RNase_II"/>
    <property type="match status" value="1"/>
</dbReference>
<dbReference type="InterPro" id="IPR011129">
    <property type="entry name" value="CSD"/>
</dbReference>
<dbReference type="InterPro" id="IPR012340">
    <property type="entry name" value="NA-bd_OB-fold"/>
</dbReference>
<dbReference type="InterPro" id="IPR013223">
    <property type="entry name" value="RNase_B_OB_dom"/>
</dbReference>
<dbReference type="InterPro" id="IPR011804">
    <property type="entry name" value="RNase_II"/>
</dbReference>
<dbReference type="InterPro" id="IPR001900">
    <property type="entry name" value="RNase_II/R"/>
</dbReference>
<dbReference type="InterPro" id="IPR022966">
    <property type="entry name" value="RNase_II/R_CS"/>
</dbReference>
<dbReference type="InterPro" id="IPR004476">
    <property type="entry name" value="RNase_II/RNase_R"/>
</dbReference>
<dbReference type="InterPro" id="IPR050180">
    <property type="entry name" value="RNR_Ribonuclease"/>
</dbReference>
<dbReference type="InterPro" id="IPR003029">
    <property type="entry name" value="S1_domain"/>
</dbReference>
<dbReference type="NCBIfam" id="TIGR00358">
    <property type="entry name" value="3_prime_RNase"/>
    <property type="match status" value="1"/>
</dbReference>
<dbReference type="NCBIfam" id="NF003455">
    <property type="entry name" value="PRK05054.1"/>
    <property type="match status" value="1"/>
</dbReference>
<dbReference type="NCBIfam" id="TIGR02062">
    <property type="entry name" value="RNase_B"/>
    <property type="match status" value="1"/>
</dbReference>
<dbReference type="PANTHER" id="PTHR23355:SF37">
    <property type="entry name" value="EXORIBONUCLEASE 2"/>
    <property type="match status" value="1"/>
</dbReference>
<dbReference type="PANTHER" id="PTHR23355">
    <property type="entry name" value="RIBONUCLEASE"/>
    <property type="match status" value="1"/>
</dbReference>
<dbReference type="Pfam" id="PF08206">
    <property type="entry name" value="OB_RNB"/>
    <property type="match status" value="1"/>
</dbReference>
<dbReference type="Pfam" id="PF00773">
    <property type="entry name" value="RNB"/>
    <property type="match status" value="1"/>
</dbReference>
<dbReference type="Pfam" id="PF00575">
    <property type="entry name" value="S1"/>
    <property type="match status" value="1"/>
</dbReference>
<dbReference type="SMART" id="SM00357">
    <property type="entry name" value="CSP"/>
    <property type="match status" value="1"/>
</dbReference>
<dbReference type="SMART" id="SM00955">
    <property type="entry name" value="RNB"/>
    <property type="match status" value="1"/>
</dbReference>
<dbReference type="SUPFAM" id="SSF50249">
    <property type="entry name" value="Nucleic acid-binding proteins"/>
    <property type="match status" value="4"/>
</dbReference>
<dbReference type="PROSITE" id="PS01175">
    <property type="entry name" value="RIBONUCLEASE_II"/>
    <property type="match status" value="1"/>
</dbReference>
<sequence length="644" mass="72875">MFQDNPLLAQLKQQLHTQTPRVEGVVKGTEKGFGFLEVDGQKSYFIPPPQMKKVMHGDRIIATLHTDKDREIAEPETLVEPFLSRFVGRVQRKDDRLSIVPDHPLLRDAIQCRPVRELTHSFQNGDWAVAEMCRHPLKGDRAFQADLTAFITNGEDHFVPWWVTLARHNLEREAPAMVESALNDAELEREDLTALNFVTIDSASTEDMDDALFVQDNGDGSWLLTIAIADPTAYVVENSELDLTARKRAFTNYLPGFNIPMLPRDLSDNLCSLRPNERRPVLVCRVTITEEGTLSNDIRFSAAWVESKAKLVYDDVSDWLEGNNRWQPQDTAIAEQITLLKRICDARSNWRQQHALVFKDRPDYRFLLGEKGEVLDIIVEHRRIANRIVEECMIAANVCAALALREHLGFGIYNVHTGFDPALVEQAASVLKANGVGADPQALLTLPGFCELRRHLDALPTQFLDSRIRRFQTFAEISTVPGPHFGLGLEAYATWTSPIRKYGDMVNHRLLKAMITGQQAEKPQEEITVQLAERRRLNRMAERDVGDWLYARYLQPQAGTDTRFTAEIIDITRGGLRVRLLDNGAVAFIPAPFIHAVRDEVVCSQETGTVQIKGETVYSQSDKIEVRIAEVRMETRNVIARPVA</sequence>
<organism>
    <name type="scientific">Yersinia pestis bv. Antiqua (strain Nepal516)</name>
    <dbReference type="NCBI Taxonomy" id="377628"/>
    <lineage>
        <taxon>Bacteria</taxon>
        <taxon>Pseudomonadati</taxon>
        <taxon>Pseudomonadota</taxon>
        <taxon>Gammaproteobacteria</taxon>
        <taxon>Enterobacterales</taxon>
        <taxon>Yersiniaceae</taxon>
        <taxon>Yersinia</taxon>
    </lineage>
</organism>
<accession>Q1CIZ7</accession>
<accession>C4GSZ9</accession>
<protein>
    <recommendedName>
        <fullName evidence="2">Exoribonuclease 2</fullName>
        <ecNumber evidence="2">3.1.13.1</ecNumber>
    </recommendedName>
    <alternativeName>
        <fullName evidence="2">Exoribonuclease II</fullName>
        <shortName evidence="2">RNase II</shortName>
        <shortName evidence="2">Ribonuclease II</shortName>
    </alternativeName>
</protein>
<proteinExistence type="inferred from homology"/>